<organism>
    <name type="scientific">Rattus norvegicus</name>
    <name type="common">Rat</name>
    <dbReference type="NCBI Taxonomy" id="10116"/>
    <lineage>
        <taxon>Eukaryota</taxon>
        <taxon>Metazoa</taxon>
        <taxon>Chordata</taxon>
        <taxon>Craniata</taxon>
        <taxon>Vertebrata</taxon>
        <taxon>Euteleostomi</taxon>
        <taxon>Mammalia</taxon>
        <taxon>Eutheria</taxon>
        <taxon>Euarchontoglires</taxon>
        <taxon>Glires</taxon>
        <taxon>Rodentia</taxon>
        <taxon>Myomorpha</taxon>
        <taxon>Muroidea</taxon>
        <taxon>Muridae</taxon>
        <taxon>Murinae</taxon>
        <taxon>Rattus</taxon>
    </lineage>
</organism>
<keyword id="KW-0007">Acetylation</keyword>
<keyword id="KW-0025">Alternative splicing</keyword>
<keyword id="KW-0963">Cytoplasm</keyword>
<keyword id="KW-0275">Fatty acid biosynthesis</keyword>
<keyword id="KW-0276">Fatty acid metabolism</keyword>
<keyword id="KW-0444">Lipid biosynthesis</keyword>
<keyword id="KW-0443">Lipid metabolism</keyword>
<keyword id="KW-0496">Mitochondrion</keyword>
<keyword id="KW-0521">NADP</keyword>
<keyword id="KW-0539">Nucleus</keyword>
<keyword id="KW-0560">Oxidoreductase</keyword>
<keyword id="KW-1185">Reference proteome</keyword>
<keyword id="KW-0809">Transit peptide</keyword>
<name>MECR_RAT</name>
<proteinExistence type="evidence at protein level"/>
<dbReference type="EC" id="1.3.1.104" evidence="2"/>
<dbReference type="EMBL" id="AB015724">
    <property type="protein sequence ID" value="BAA34804.1"/>
    <property type="molecule type" value="mRNA"/>
</dbReference>
<dbReference type="EMBL" id="AABR06040190">
    <property type="status" value="NOT_ANNOTATED_CDS"/>
    <property type="molecule type" value="Genomic_DNA"/>
</dbReference>
<dbReference type="EMBL" id="AABR06040191">
    <property type="status" value="NOT_ANNOTATED_CDS"/>
    <property type="molecule type" value="Genomic_DNA"/>
</dbReference>
<dbReference type="RefSeq" id="NP_058905.1">
    <molecule id="Q9Z311-1"/>
    <property type="nucleotide sequence ID" value="NM_017209.1"/>
</dbReference>
<dbReference type="SMR" id="Q9Z311"/>
<dbReference type="FunCoup" id="Q9Z311">
    <property type="interactions" value="3135"/>
</dbReference>
<dbReference type="STRING" id="10116.ENSRNOP00000031375"/>
<dbReference type="iPTMnet" id="Q9Z311"/>
<dbReference type="PhosphoSitePlus" id="Q9Z311"/>
<dbReference type="PaxDb" id="10116-ENSRNOP00000031375"/>
<dbReference type="GeneID" id="29470"/>
<dbReference type="KEGG" id="rno:29470"/>
<dbReference type="UCSC" id="RGD:3208">
    <molecule id="Q9Z311-1"/>
    <property type="organism name" value="rat"/>
</dbReference>
<dbReference type="AGR" id="RGD:3208"/>
<dbReference type="CTD" id="51102"/>
<dbReference type="RGD" id="3208">
    <property type="gene designation" value="Mecr"/>
</dbReference>
<dbReference type="eggNOG" id="KOG0025">
    <property type="taxonomic scope" value="Eukaryota"/>
</dbReference>
<dbReference type="InParanoid" id="Q9Z311"/>
<dbReference type="OrthoDB" id="25071at9989"/>
<dbReference type="PhylomeDB" id="Q9Z311"/>
<dbReference type="TreeFam" id="TF312886"/>
<dbReference type="Reactome" id="R-RNO-77346">
    <property type="pathway name" value="Beta oxidation of decanoyl-CoA to octanoyl-CoA-CoA"/>
</dbReference>
<dbReference type="PRO" id="PR:Q9Z311"/>
<dbReference type="Proteomes" id="UP000002494">
    <property type="component" value="Unplaced"/>
</dbReference>
<dbReference type="GO" id="GO:0016020">
    <property type="term" value="C:membrane"/>
    <property type="evidence" value="ECO:0007669"/>
    <property type="project" value="GOC"/>
</dbReference>
<dbReference type="GO" id="GO:0005739">
    <property type="term" value="C:mitochondrion"/>
    <property type="evidence" value="ECO:0000314"/>
    <property type="project" value="UniProtKB"/>
</dbReference>
<dbReference type="GO" id="GO:0005634">
    <property type="term" value="C:nucleus"/>
    <property type="evidence" value="ECO:0007669"/>
    <property type="project" value="UniProtKB-SubCell"/>
</dbReference>
<dbReference type="GO" id="GO:0141148">
    <property type="term" value="F:enoyl-[acyl-carrier-protein] reductase (NADPH) activity"/>
    <property type="evidence" value="ECO:0000250"/>
    <property type="project" value="UniProtKB"/>
</dbReference>
<dbReference type="GO" id="GO:0005102">
    <property type="term" value="F:signaling receptor binding"/>
    <property type="evidence" value="ECO:0000314"/>
    <property type="project" value="RGD"/>
</dbReference>
<dbReference type="GO" id="GO:0046513">
    <property type="term" value="P:ceramide biosynthetic process"/>
    <property type="evidence" value="ECO:0000250"/>
    <property type="project" value="UniProtKB"/>
</dbReference>
<dbReference type="GO" id="GO:0006633">
    <property type="term" value="P:fatty acid biosynthetic process"/>
    <property type="evidence" value="ECO:0007669"/>
    <property type="project" value="UniProtKB-KW"/>
</dbReference>
<dbReference type="GO" id="GO:0006631">
    <property type="term" value="P:fatty acid metabolic process"/>
    <property type="evidence" value="ECO:0000250"/>
    <property type="project" value="UniProtKB"/>
</dbReference>
<dbReference type="GO" id="GO:0006879">
    <property type="term" value="P:intracellular iron ion homeostasis"/>
    <property type="evidence" value="ECO:0000250"/>
    <property type="project" value="UniProtKB"/>
</dbReference>
<dbReference type="CDD" id="cd08290">
    <property type="entry name" value="ETR"/>
    <property type="match status" value="1"/>
</dbReference>
<dbReference type="FunFam" id="3.40.50.720:FF:000112">
    <property type="entry name" value="Enoyl-[acyl-carrier-protein] reductase 1, mitochondrial"/>
    <property type="match status" value="1"/>
</dbReference>
<dbReference type="FunFam" id="3.90.180.10:FF:000010">
    <property type="entry name" value="Enoyl-[acyl-carrier-protein] reductase, mitochondrial"/>
    <property type="match status" value="1"/>
</dbReference>
<dbReference type="Gene3D" id="3.90.180.10">
    <property type="entry name" value="Medium-chain alcohol dehydrogenases, catalytic domain"/>
    <property type="match status" value="1"/>
</dbReference>
<dbReference type="Gene3D" id="3.40.50.720">
    <property type="entry name" value="NAD(P)-binding Rossmann-like Domain"/>
    <property type="match status" value="1"/>
</dbReference>
<dbReference type="InterPro" id="IPR013149">
    <property type="entry name" value="ADH-like_C"/>
</dbReference>
<dbReference type="InterPro" id="IPR013154">
    <property type="entry name" value="ADH-like_N"/>
</dbReference>
<dbReference type="InterPro" id="IPR011032">
    <property type="entry name" value="GroES-like_sf"/>
</dbReference>
<dbReference type="InterPro" id="IPR051034">
    <property type="entry name" value="Mito_Enoyl-ACP_Reductase"/>
</dbReference>
<dbReference type="InterPro" id="IPR036291">
    <property type="entry name" value="NAD(P)-bd_dom_sf"/>
</dbReference>
<dbReference type="InterPro" id="IPR020843">
    <property type="entry name" value="PKS_ER"/>
</dbReference>
<dbReference type="PANTHER" id="PTHR43981">
    <property type="entry name" value="ENOYL-[ACYL-CARRIER-PROTEIN] REDUCTASE, MITOCHONDRIAL"/>
    <property type="match status" value="1"/>
</dbReference>
<dbReference type="PANTHER" id="PTHR43981:SF9">
    <property type="entry name" value="ENOYL-[ACYL-CARRIER-PROTEIN] REDUCTASE, MITOCHONDRIAL"/>
    <property type="match status" value="1"/>
</dbReference>
<dbReference type="Pfam" id="PF08240">
    <property type="entry name" value="ADH_N"/>
    <property type="match status" value="1"/>
</dbReference>
<dbReference type="Pfam" id="PF00107">
    <property type="entry name" value="ADH_zinc_N"/>
    <property type="match status" value="1"/>
</dbReference>
<dbReference type="SMART" id="SM00829">
    <property type="entry name" value="PKS_ER"/>
    <property type="match status" value="1"/>
</dbReference>
<dbReference type="SUPFAM" id="SSF50129">
    <property type="entry name" value="GroES-like"/>
    <property type="match status" value="1"/>
</dbReference>
<dbReference type="SUPFAM" id="SSF51735">
    <property type="entry name" value="NAD(P)-binding Rossmann-fold domains"/>
    <property type="match status" value="1"/>
</dbReference>
<sequence length="373" mass="40327">MLVSRRLTGARARAPLLASLLEAWCRQGRTTSSYSAFSEPSHVRALVYGNHGDPAKVIQLKNLELTAVEGSDVHVKMLAAPINPSDINMIQGNYGLLPKLPAVGGNEGVGQVIAVGSSVSGLKPGDWVIPANAGLGTWRTEAVFSEEALIGVPKDIPLQSAATLGVNPCTAYRMLVDFEQLQPGDSVIQNASNSGVGQAVIQIASALGLKTINVIRDRPDIKKLTDRLKDLGADYVLTEEELRMPETKNIFKDLPLPRLALNCVGGKSSTELLRHLAPGGTMVTYGGMAKQPVTASVSMLIFKDLKLRGFWLSQWKKNHSPDEFKELILILCNLIRQGQLTAPAWSGIPLQDYQQALEASMKPFVSLKQILTM</sequence>
<feature type="transit peptide" description="Mitochondrion" evidence="5">
    <location>
        <begin position="1"/>
        <end position="53"/>
    </location>
</feature>
<feature type="chain" id="PRO_0000000890" description="Enoyl-[acyl-carrier-protein] reductase, mitochondrial">
    <location>
        <begin position="54"/>
        <end position="373"/>
    </location>
</feature>
<feature type="active site" description="Proton donor" evidence="1">
    <location>
        <position position="94"/>
    </location>
</feature>
<feature type="binding site" evidence="1">
    <location>
        <position position="167"/>
    </location>
    <ligand>
        <name>NADP(+)</name>
        <dbReference type="ChEBI" id="CHEBI:58349"/>
    </ligand>
</feature>
<feature type="binding site" evidence="1">
    <location>
        <begin position="193"/>
        <end position="196"/>
    </location>
    <ligand>
        <name>NADP(+)</name>
        <dbReference type="ChEBI" id="CHEBI:58349"/>
    </ligand>
</feature>
<feature type="binding site" evidence="1">
    <location>
        <begin position="216"/>
        <end position="218"/>
    </location>
    <ligand>
        <name>NADP(+)</name>
        <dbReference type="ChEBI" id="CHEBI:58349"/>
    </ligand>
</feature>
<feature type="binding site" evidence="1">
    <location>
        <begin position="285"/>
        <end position="288"/>
    </location>
    <ligand>
        <name>NADP(+)</name>
        <dbReference type="ChEBI" id="CHEBI:58349"/>
    </ligand>
</feature>
<feature type="binding site" evidence="1">
    <location>
        <begin position="310"/>
        <end position="312"/>
    </location>
    <ligand>
        <name>NADP(+)</name>
        <dbReference type="ChEBI" id="CHEBI:58349"/>
    </ligand>
</feature>
<feature type="binding site" evidence="1">
    <location>
        <position position="368"/>
    </location>
    <ligand>
        <name>NADP(+)</name>
        <dbReference type="ChEBI" id="CHEBI:58349"/>
    </ligand>
</feature>
<feature type="modified residue" description="N6-acetyllysine; alternate" evidence="3">
    <location>
        <position position="61"/>
    </location>
</feature>
<feature type="modified residue" description="N6-succinyllysine; alternate" evidence="3">
    <location>
        <position position="61"/>
    </location>
</feature>
<feature type="modified residue" description="N6-acetyllysine; alternate" evidence="3">
    <location>
        <position position="252"/>
    </location>
</feature>
<feature type="modified residue" description="N6-succinyllysine; alternate" evidence="3">
    <location>
        <position position="252"/>
    </location>
</feature>
<feature type="modified residue" description="N6-acetyllysine; alternate" evidence="3">
    <location>
        <position position="267"/>
    </location>
</feature>
<feature type="modified residue" description="N6-succinyllysine; alternate" evidence="3">
    <location>
        <position position="267"/>
    </location>
</feature>
<feature type="modified residue" description="N6-succinyllysine" evidence="3">
    <location>
        <position position="316"/>
    </location>
</feature>
<feature type="splice variant" id="VSP_057305" description="In isoform 2.">
    <location>
        <begin position="1"/>
        <end position="76"/>
    </location>
</feature>
<gene>
    <name type="primary">Mecr</name>
    <name type="synonym">Nrbf1</name>
</gene>
<comment type="function">
    <text evidence="2 3 4">Catalyzes the NADPH-dependent reduction of trans-2-enoyl thioesters in mitochondrial fatty acid synthesis (fatty acid synthesis type II). Fatty acid chain elongation in mitochondria uses acyl carrier protein (ACP) as an acyl group carrier, but the enzyme accepts both ACP and CoA thioesters as substrates in vitro. Displays a preference for medium-chain over short- and long-chain substrates (By similarity). May provide the octanoyl chain used for lipoic acid biosynthesis, regulating protein lipoylation and mitochondrial respiratory activity particularly in Purkinje cells (By similarity). Involved in iron homeostasis; affecting Fe-S cluster assembly and ceramide metabolism (By similarity). Required for proper morphology and bioenergetic functions of mitochondria (By similarity). Required for maintenance of neurons (By similarity).</text>
</comment>
<comment type="catalytic activity">
    <reaction evidence="2">
        <text>a 2,3-saturated acyl-[ACP] + NADP(+) = a (2E)-enoyl-[ACP] + NADPH + H(+)</text>
        <dbReference type="Rhea" id="RHEA:22564"/>
        <dbReference type="Rhea" id="RHEA-COMP:9925"/>
        <dbReference type="Rhea" id="RHEA-COMP:9926"/>
        <dbReference type="ChEBI" id="CHEBI:15378"/>
        <dbReference type="ChEBI" id="CHEBI:57783"/>
        <dbReference type="ChEBI" id="CHEBI:58349"/>
        <dbReference type="ChEBI" id="CHEBI:78784"/>
        <dbReference type="ChEBI" id="CHEBI:78785"/>
        <dbReference type="EC" id="1.3.1.104"/>
    </reaction>
    <physiologicalReaction direction="right-to-left" evidence="2">
        <dbReference type="Rhea" id="RHEA:22566"/>
    </physiologicalReaction>
</comment>
<comment type="catalytic activity">
    <reaction evidence="2">
        <text>(2E)-butenoyl-[ACP] + NADPH + H(+) = butanoyl-[ACP] + NADP(+)</text>
        <dbReference type="Rhea" id="RHEA:41812"/>
        <dbReference type="Rhea" id="RHEA-COMP:9627"/>
        <dbReference type="Rhea" id="RHEA-COMP:9628"/>
        <dbReference type="ChEBI" id="CHEBI:15378"/>
        <dbReference type="ChEBI" id="CHEBI:57783"/>
        <dbReference type="ChEBI" id="CHEBI:58349"/>
        <dbReference type="ChEBI" id="CHEBI:78453"/>
        <dbReference type="ChEBI" id="CHEBI:78454"/>
    </reaction>
    <physiologicalReaction direction="left-to-right" evidence="2">
        <dbReference type="Rhea" id="RHEA:41813"/>
    </physiologicalReaction>
</comment>
<comment type="catalytic activity">
    <reaction evidence="2">
        <text>(2E)-hexenoyl-[ACP] + NADPH + H(+) = hexanoyl-[ACP] + NADP(+)</text>
        <dbReference type="Rhea" id="RHEA:41832"/>
        <dbReference type="Rhea" id="RHEA-COMP:9631"/>
        <dbReference type="Rhea" id="RHEA-COMP:9632"/>
        <dbReference type="ChEBI" id="CHEBI:15378"/>
        <dbReference type="ChEBI" id="CHEBI:57783"/>
        <dbReference type="ChEBI" id="CHEBI:58349"/>
        <dbReference type="ChEBI" id="CHEBI:78458"/>
        <dbReference type="ChEBI" id="CHEBI:78459"/>
    </reaction>
    <physiologicalReaction direction="left-to-right" evidence="2">
        <dbReference type="Rhea" id="RHEA:41833"/>
    </physiologicalReaction>
</comment>
<comment type="catalytic activity">
    <reaction evidence="2">
        <text>(2E)-octenoyl-[ACP] + NADPH + H(+) = octanoyl-[ACP] + NADP(+)</text>
        <dbReference type="Rhea" id="RHEA:41848"/>
        <dbReference type="Rhea" id="RHEA-COMP:9635"/>
        <dbReference type="Rhea" id="RHEA-COMP:9636"/>
        <dbReference type="ChEBI" id="CHEBI:15378"/>
        <dbReference type="ChEBI" id="CHEBI:57783"/>
        <dbReference type="ChEBI" id="CHEBI:58349"/>
        <dbReference type="ChEBI" id="CHEBI:78462"/>
        <dbReference type="ChEBI" id="CHEBI:78463"/>
    </reaction>
    <physiologicalReaction direction="left-to-right" evidence="2">
        <dbReference type="Rhea" id="RHEA:41849"/>
    </physiologicalReaction>
</comment>
<comment type="catalytic activity">
    <reaction evidence="2">
        <text>(2E)-decenoyl-[ACP] + NADPH + H(+) = decanoyl-[ACP] + NADP(+)</text>
        <dbReference type="Rhea" id="RHEA:41864"/>
        <dbReference type="Rhea" id="RHEA-COMP:9639"/>
        <dbReference type="Rhea" id="RHEA-COMP:9640"/>
        <dbReference type="ChEBI" id="CHEBI:15378"/>
        <dbReference type="ChEBI" id="CHEBI:57783"/>
        <dbReference type="ChEBI" id="CHEBI:58349"/>
        <dbReference type="ChEBI" id="CHEBI:78467"/>
        <dbReference type="ChEBI" id="CHEBI:78468"/>
    </reaction>
    <physiologicalReaction direction="left-to-right" evidence="2">
        <dbReference type="Rhea" id="RHEA:41865"/>
    </physiologicalReaction>
</comment>
<comment type="catalytic activity">
    <reaction evidence="2">
        <text>(2E)-dodecenoyl-[ACP] + NADPH + H(+) = dodecanoyl-[ACP] + NADP(+)</text>
        <dbReference type="Rhea" id="RHEA:41880"/>
        <dbReference type="Rhea" id="RHEA-COMP:9643"/>
        <dbReference type="Rhea" id="RHEA-COMP:9644"/>
        <dbReference type="ChEBI" id="CHEBI:15378"/>
        <dbReference type="ChEBI" id="CHEBI:57783"/>
        <dbReference type="ChEBI" id="CHEBI:58349"/>
        <dbReference type="ChEBI" id="CHEBI:65264"/>
        <dbReference type="ChEBI" id="CHEBI:78472"/>
    </reaction>
    <physiologicalReaction direction="left-to-right" evidence="2">
        <dbReference type="Rhea" id="RHEA:41881"/>
    </physiologicalReaction>
</comment>
<comment type="catalytic activity">
    <reaction evidence="2">
        <text>(2E)-tetradecenoyl-[ACP] + NADPH + H(+) = tetradecanoyl-[ACP] + NADP(+)</text>
        <dbReference type="Rhea" id="RHEA:41896"/>
        <dbReference type="Rhea" id="RHEA-COMP:9647"/>
        <dbReference type="Rhea" id="RHEA-COMP:9648"/>
        <dbReference type="ChEBI" id="CHEBI:15378"/>
        <dbReference type="ChEBI" id="CHEBI:57783"/>
        <dbReference type="ChEBI" id="CHEBI:58349"/>
        <dbReference type="ChEBI" id="CHEBI:78475"/>
        <dbReference type="ChEBI" id="CHEBI:78477"/>
    </reaction>
    <physiologicalReaction direction="left-to-right" evidence="2">
        <dbReference type="Rhea" id="RHEA:41897"/>
    </physiologicalReaction>
</comment>
<comment type="catalytic activity">
    <reaction evidence="2">
        <text>(2E)-hexadecenoyl-[ACP] + NADPH + H(+) = hexadecanoyl-[ACP] + NADP(+)</text>
        <dbReference type="Rhea" id="RHEA:41912"/>
        <dbReference type="Rhea" id="RHEA-COMP:9651"/>
        <dbReference type="Rhea" id="RHEA-COMP:9652"/>
        <dbReference type="ChEBI" id="CHEBI:15378"/>
        <dbReference type="ChEBI" id="CHEBI:57783"/>
        <dbReference type="ChEBI" id="CHEBI:58349"/>
        <dbReference type="ChEBI" id="CHEBI:78481"/>
        <dbReference type="ChEBI" id="CHEBI:78483"/>
    </reaction>
    <physiologicalReaction direction="left-to-right" evidence="2">
        <dbReference type="Rhea" id="RHEA:41913"/>
    </physiologicalReaction>
</comment>
<comment type="subunit">
    <text evidence="2">Homodimer (By similarity).</text>
</comment>
<comment type="subunit">
    <molecule>Isoform 2</molecule>
    <text evidence="7">Interacts with PPARA in the nucleus and increases its activity.</text>
</comment>
<comment type="subcellular location">
    <molecule>Isoform 1</molecule>
    <subcellularLocation>
        <location evidence="6">Mitochondrion</location>
    </subcellularLocation>
</comment>
<comment type="subcellular location">
    <molecule>Isoform 2</molecule>
    <subcellularLocation>
        <location evidence="7">Cytoplasm</location>
    </subcellularLocation>
    <subcellularLocation>
        <location evidence="7">Nucleus</location>
    </subcellularLocation>
</comment>
<comment type="alternative products">
    <event type="alternative splicing"/>
    <isoform>
        <id>Q9Z311-1</id>
        <name>1</name>
        <sequence type="displayed"/>
    </isoform>
    <isoform>
        <id>Q9Z311-2</id>
        <name>2</name>
        <name>cMECR</name>
        <sequence type="described" ref="VSP_057305"/>
    </isoform>
</comment>
<comment type="similarity">
    <text evidence="9">Belongs to the zinc-containing alcohol dehydrogenase family. Quinone oxidoreductase subfamily.</text>
</comment>
<comment type="caution">
    <text evidence="10 11">Was originally (PubMed:9795230) thought to be a nuclear protein that interact with nuclear receptor. However, it was shown later to be mitochondrial (PubMed:12654921), a function related to nuclear receptors being unsure.</text>
</comment>
<reference key="1">
    <citation type="journal article" date="1998" name="Gene">
        <title>Nuclear receptor binding factor-1 (NRBF-1), a protein interacting with a wide spectrum of nuclear hormone receptors.</title>
        <authorList>
            <person name="Masuda N."/>
            <person name="Yasumo H."/>
            <person name="Furusawa T."/>
            <person name="Tsukamoto T."/>
            <person name="Sadano H."/>
            <person name="Osumi T."/>
        </authorList>
    </citation>
    <scope>NUCLEOTIDE SEQUENCE [MRNA] (ISOFORM 1)</scope>
</reference>
<reference key="2">
    <citation type="journal article" date="2004" name="Nature">
        <title>Genome sequence of the Brown Norway rat yields insights into mammalian evolution.</title>
        <authorList>
            <person name="Gibbs R.A."/>
            <person name="Weinstock G.M."/>
            <person name="Metzker M.L."/>
            <person name="Muzny D.M."/>
            <person name="Sodergren E.J."/>
            <person name="Scherer S."/>
            <person name="Scott G."/>
            <person name="Steffen D."/>
            <person name="Worley K.C."/>
            <person name="Burch P.E."/>
            <person name="Okwuonu G."/>
            <person name="Hines S."/>
            <person name="Lewis L."/>
            <person name="Deramo C."/>
            <person name="Delgado O."/>
            <person name="Dugan-Rocha S."/>
            <person name="Miner G."/>
            <person name="Morgan M."/>
            <person name="Hawes A."/>
            <person name="Gill R."/>
            <person name="Holt R.A."/>
            <person name="Adams M.D."/>
            <person name="Amanatides P.G."/>
            <person name="Baden-Tillson H."/>
            <person name="Barnstead M."/>
            <person name="Chin S."/>
            <person name="Evans C.A."/>
            <person name="Ferriera S."/>
            <person name="Fosler C."/>
            <person name="Glodek A."/>
            <person name="Gu Z."/>
            <person name="Jennings D."/>
            <person name="Kraft C.L."/>
            <person name="Nguyen T."/>
            <person name="Pfannkoch C.M."/>
            <person name="Sitter C."/>
            <person name="Sutton G.G."/>
            <person name="Venter J.C."/>
            <person name="Woodage T."/>
            <person name="Smith D."/>
            <person name="Lee H.-M."/>
            <person name="Gustafson E."/>
            <person name="Cahill P."/>
            <person name="Kana A."/>
            <person name="Doucette-Stamm L."/>
            <person name="Weinstock K."/>
            <person name="Fechtel K."/>
            <person name="Weiss R.B."/>
            <person name="Dunn D.M."/>
            <person name="Green E.D."/>
            <person name="Blakesley R.W."/>
            <person name="Bouffard G.G."/>
            <person name="De Jong P.J."/>
            <person name="Osoegawa K."/>
            <person name="Zhu B."/>
            <person name="Marra M."/>
            <person name="Schein J."/>
            <person name="Bosdet I."/>
            <person name="Fjell C."/>
            <person name="Jones S."/>
            <person name="Krzywinski M."/>
            <person name="Mathewson C."/>
            <person name="Siddiqui A."/>
            <person name="Wye N."/>
            <person name="McPherson J."/>
            <person name="Zhao S."/>
            <person name="Fraser C.M."/>
            <person name="Shetty J."/>
            <person name="Shatsman S."/>
            <person name="Geer K."/>
            <person name="Chen Y."/>
            <person name="Abramzon S."/>
            <person name="Nierman W.C."/>
            <person name="Havlak P.H."/>
            <person name="Chen R."/>
            <person name="Durbin K.J."/>
            <person name="Egan A."/>
            <person name="Ren Y."/>
            <person name="Song X.-Z."/>
            <person name="Li B."/>
            <person name="Liu Y."/>
            <person name="Qin X."/>
            <person name="Cawley S."/>
            <person name="Cooney A.J."/>
            <person name="D'Souza L.M."/>
            <person name="Martin K."/>
            <person name="Wu J.Q."/>
            <person name="Gonzalez-Garay M.L."/>
            <person name="Jackson A.R."/>
            <person name="Kalafus K.J."/>
            <person name="McLeod M.P."/>
            <person name="Milosavljevic A."/>
            <person name="Virk D."/>
            <person name="Volkov A."/>
            <person name="Wheeler D.A."/>
            <person name="Zhang Z."/>
            <person name="Bailey J.A."/>
            <person name="Eichler E.E."/>
            <person name="Tuzun E."/>
            <person name="Birney E."/>
            <person name="Mongin E."/>
            <person name="Ureta-Vidal A."/>
            <person name="Woodwark C."/>
            <person name="Zdobnov E."/>
            <person name="Bork P."/>
            <person name="Suyama M."/>
            <person name="Torrents D."/>
            <person name="Alexandersson M."/>
            <person name="Trask B.J."/>
            <person name="Young J.M."/>
            <person name="Huang H."/>
            <person name="Wang H."/>
            <person name="Xing H."/>
            <person name="Daniels S."/>
            <person name="Gietzen D."/>
            <person name="Schmidt J."/>
            <person name="Stevens K."/>
            <person name="Vitt U."/>
            <person name="Wingrove J."/>
            <person name="Camara F."/>
            <person name="Mar Alba M."/>
            <person name="Abril J.F."/>
            <person name="Guigo R."/>
            <person name="Smit A."/>
            <person name="Dubchak I."/>
            <person name="Rubin E.M."/>
            <person name="Couronne O."/>
            <person name="Poliakov A."/>
            <person name="Huebner N."/>
            <person name="Ganten D."/>
            <person name="Goesele C."/>
            <person name="Hummel O."/>
            <person name="Kreitler T."/>
            <person name="Lee Y.-A."/>
            <person name="Monti J."/>
            <person name="Schulz H."/>
            <person name="Zimdahl H."/>
            <person name="Himmelbauer H."/>
            <person name="Lehrach H."/>
            <person name="Jacob H.J."/>
            <person name="Bromberg S."/>
            <person name="Gullings-Handley J."/>
            <person name="Jensen-Seaman M.I."/>
            <person name="Kwitek A.E."/>
            <person name="Lazar J."/>
            <person name="Pasko D."/>
            <person name="Tonellato P.J."/>
            <person name="Twigger S."/>
            <person name="Ponting C.P."/>
            <person name="Duarte J.M."/>
            <person name="Rice S."/>
            <person name="Goodstadt L."/>
            <person name="Beatson S.A."/>
            <person name="Emes R.D."/>
            <person name="Winter E.E."/>
            <person name="Webber C."/>
            <person name="Brandt P."/>
            <person name="Nyakatura G."/>
            <person name="Adetobi M."/>
            <person name="Chiaromonte F."/>
            <person name="Elnitski L."/>
            <person name="Eswara P."/>
            <person name="Hardison R.C."/>
            <person name="Hou M."/>
            <person name="Kolbe D."/>
            <person name="Makova K."/>
            <person name="Miller W."/>
            <person name="Nekrutenko A."/>
            <person name="Riemer C."/>
            <person name="Schwartz S."/>
            <person name="Taylor J."/>
            <person name="Yang S."/>
            <person name="Zhang Y."/>
            <person name="Lindpaintner K."/>
            <person name="Andrews T.D."/>
            <person name="Caccamo M."/>
            <person name="Clamp M."/>
            <person name="Clarke L."/>
            <person name="Curwen V."/>
            <person name="Durbin R.M."/>
            <person name="Eyras E."/>
            <person name="Searle S.M."/>
            <person name="Cooper G.M."/>
            <person name="Batzoglou S."/>
            <person name="Brudno M."/>
            <person name="Sidow A."/>
            <person name="Stone E.A."/>
            <person name="Payseur B.A."/>
            <person name="Bourque G."/>
            <person name="Lopez-Otin C."/>
            <person name="Puente X.S."/>
            <person name="Chakrabarti K."/>
            <person name="Chatterji S."/>
            <person name="Dewey C."/>
            <person name="Pachter L."/>
            <person name="Bray N."/>
            <person name="Yap V.B."/>
            <person name="Caspi A."/>
            <person name="Tesler G."/>
            <person name="Pevzner P.A."/>
            <person name="Haussler D."/>
            <person name="Roskin K.M."/>
            <person name="Baertsch R."/>
            <person name="Clawson H."/>
            <person name="Furey T.S."/>
            <person name="Hinrichs A.S."/>
            <person name="Karolchik D."/>
            <person name="Kent W.J."/>
            <person name="Rosenbloom K.R."/>
            <person name="Trumbower H."/>
            <person name="Weirauch M."/>
            <person name="Cooper D.N."/>
            <person name="Stenson P.D."/>
            <person name="Ma B."/>
            <person name="Brent M."/>
            <person name="Arumugam M."/>
            <person name="Shteynberg D."/>
            <person name="Copley R.R."/>
            <person name="Taylor M.S."/>
            <person name="Riethman H."/>
            <person name="Mudunuri U."/>
            <person name="Peterson J."/>
            <person name="Guyer M."/>
            <person name="Felsenfeld A."/>
            <person name="Old S."/>
            <person name="Mockrin S."/>
            <person name="Collins F.S."/>
        </authorList>
    </citation>
    <scope>NUCLEOTIDE SEQUENCE [LARGE SCALE GENOMIC DNA]</scope>
    <source>
        <strain>Brown Norway</strain>
    </source>
</reference>
<reference key="3">
    <citation type="journal article" date="2014" name="Endocrinol. Metab.">
        <title>A novel cytosolic isoform of mitochondrial Trans-2-Enoyl-CoA reductase enhances peroxisome proliferator-activated receptor alpha activity.</title>
        <authorList>
            <person name="Kim D.G."/>
            <person name="Yoo J.C."/>
            <person name="Kim E."/>
            <person name="Lee Y.S."/>
            <person name="Yarishkin O.V."/>
            <person name="Lee da Y."/>
            <person name="Lee K.H."/>
            <person name="Hong S.G."/>
            <person name="Hwang E.M."/>
            <person name="Park J.Y."/>
        </authorList>
    </citation>
    <scope>NUCLEOTIDE SEQUENCE [MRNA] (ISOFORM 2)</scope>
    <scope>SUBCELLULAR LOCATION (ISOFORM 2)</scope>
    <scope>INTERACTION WITH PPARA (ISOFORM 2)</scope>
</reference>
<reference key="4">
    <citation type="journal article" date="2003" name="J. Biol. Chem.">
        <title>Characterization of 2-enoyl thioester reductase from mammals: an ortholog of Ybr026p/Mrf1'p of the yeast mitochondrial fatty acid synthesis type II.</title>
        <authorList>
            <person name="Miinalainen I.J."/>
            <person name="Chen Z.-J."/>
            <person name="Torkko J.M."/>
            <person name="Pirilae P.L."/>
            <person name="Sormunen R.T."/>
            <person name="Bergmann U."/>
            <person name="Qin Y.-M."/>
            <person name="Hiltunen J.K."/>
        </authorList>
    </citation>
    <scope>SUBCELLULAR LOCATION (ISOFORM 1)</scope>
</reference>
<accession>Q9Z311</accession>
<accession>F1LPY7</accession>
<evidence type="ECO:0000250" key="1">
    <source>
        <dbReference type="UniProtKB" id="Q8WZM3"/>
    </source>
</evidence>
<evidence type="ECO:0000250" key="2">
    <source>
        <dbReference type="UniProtKB" id="Q9BV79"/>
    </source>
</evidence>
<evidence type="ECO:0000250" key="3">
    <source>
        <dbReference type="UniProtKB" id="Q9DCS3"/>
    </source>
</evidence>
<evidence type="ECO:0000250" key="4">
    <source>
        <dbReference type="UniProtKB" id="Q9V6U9"/>
    </source>
</evidence>
<evidence type="ECO:0000255" key="5"/>
<evidence type="ECO:0000269" key="6">
    <source>
    </source>
</evidence>
<evidence type="ECO:0000269" key="7">
    <source>
    </source>
</evidence>
<evidence type="ECO:0000303" key="8">
    <source>
    </source>
</evidence>
<evidence type="ECO:0000305" key="9"/>
<evidence type="ECO:0000305" key="10">
    <source>
    </source>
</evidence>
<evidence type="ECO:0000305" key="11">
    <source>
    </source>
</evidence>
<protein>
    <recommendedName>
        <fullName>Enoyl-[acyl-carrier-protein] reductase, mitochondrial</fullName>
        <ecNumber evidence="2">1.3.1.104</ecNumber>
    </recommendedName>
    <alternativeName>
        <fullName evidence="8">2-enoyl thioester reductase</fullName>
    </alternativeName>
    <alternativeName>
        <fullName>Nuclear receptor-binding factor 1</fullName>
        <shortName>NRBF-1</shortName>
    </alternativeName>
</protein>